<name>SUCC_PELUB</name>
<gene>
    <name evidence="1" type="primary">sucC</name>
    <name type="ordered locus">SAR11_0239</name>
</gene>
<dbReference type="EC" id="6.2.1.5" evidence="1"/>
<dbReference type="EMBL" id="CP000084">
    <property type="protein sequence ID" value="AAZ21060.1"/>
    <property type="molecule type" value="Genomic_DNA"/>
</dbReference>
<dbReference type="RefSeq" id="WP_011281562.1">
    <property type="nucleotide sequence ID" value="NC_007205.1"/>
</dbReference>
<dbReference type="SMR" id="Q4FP29"/>
<dbReference type="STRING" id="335992.SAR11_0239"/>
<dbReference type="GeneID" id="66294736"/>
<dbReference type="KEGG" id="pub:SAR11_0239"/>
<dbReference type="eggNOG" id="COG0045">
    <property type="taxonomic scope" value="Bacteria"/>
</dbReference>
<dbReference type="HOGENOM" id="CLU_037430_0_2_5"/>
<dbReference type="OrthoDB" id="9802602at2"/>
<dbReference type="UniPathway" id="UPA00223">
    <property type="reaction ID" value="UER00999"/>
</dbReference>
<dbReference type="Proteomes" id="UP000002528">
    <property type="component" value="Chromosome"/>
</dbReference>
<dbReference type="GO" id="GO:0005829">
    <property type="term" value="C:cytosol"/>
    <property type="evidence" value="ECO:0007669"/>
    <property type="project" value="TreeGrafter"/>
</dbReference>
<dbReference type="GO" id="GO:0042709">
    <property type="term" value="C:succinate-CoA ligase complex"/>
    <property type="evidence" value="ECO:0007669"/>
    <property type="project" value="TreeGrafter"/>
</dbReference>
<dbReference type="GO" id="GO:0005524">
    <property type="term" value="F:ATP binding"/>
    <property type="evidence" value="ECO:0007669"/>
    <property type="project" value="UniProtKB-UniRule"/>
</dbReference>
<dbReference type="GO" id="GO:0000287">
    <property type="term" value="F:magnesium ion binding"/>
    <property type="evidence" value="ECO:0007669"/>
    <property type="project" value="UniProtKB-UniRule"/>
</dbReference>
<dbReference type="GO" id="GO:0004775">
    <property type="term" value="F:succinate-CoA ligase (ADP-forming) activity"/>
    <property type="evidence" value="ECO:0007669"/>
    <property type="project" value="UniProtKB-UniRule"/>
</dbReference>
<dbReference type="GO" id="GO:0004776">
    <property type="term" value="F:succinate-CoA ligase (GDP-forming) activity"/>
    <property type="evidence" value="ECO:0007669"/>
    <property type="project" value="RHEA"/>
</dbReference>
<dbReference type="GO" id="GO:0006104">
    <property type="term" value="P:succinyl-CoA metabolic process"/>
    <property type="evidence" value="ECO:0007669"/>
    <property type="project" value="TreeGrafter"/>
</dbReference>
<dbReference type="GO" id="GO:0006099">
    <property type="term" value="P:tricarboxylic acid cycle"/>
    <property type="evidence" value="ECO:0007669"/>
    <property type="project" value="UniProtKB-UniRule"/>
</dbReference>
<dbReference type="FunFam" id="3.30.1490.20:FF:000002">
    <property type="entry name" value="Succinate--CoA ligase [ADP-forming] subunit beta"/>
    <property type="match status" value="1"/>
</dbReference>
<dbReference type="FunFam" id="3.30.470.20:FF:000002">
    <property type="entry name" value="Succinate--CoA ligase [ADP-forming] subunit beta"/>
    <property type="match status" value="1"/>
</dbReference>
<dbReference type="FunFam" id="3.40.50.261:FF:000001">
    <property type="entry name" value="Succinate--CoA ligase [ADP-forming] subunit beta"/>
    <property type="match status" value="1"/>
</dbReference>
<dbReference type="Gene3D" id="3.30.1490.20">
    <property type="entry name" value="ATP-grasp fold, A domain"/>
    <property type="match status" value="1"/>
</dbReference>
<dbReference type="Gene3D" id="3.30.470.20">
    <property type="entry name" value="ATP-grasp fold, B domain"/>
    <property type="match status" value="1"/>
</dbReference>
<dbReference type="Gene3D" id="3.40.50.261">
    <property type="entry name" value="Succinyl-CoA synthetase domains"/>
    <property type="match status" value="1"/>
</dbReference>
<dbReference type="HAMAP" id="MF_00558">
    <property type="entry name" value="Succ_CoA_beta"/>
    <property type="match status" value="1"/>
</dbReference>
<dbReference type="InterPro" id="IPR013650">
    <property type="entry name" value="ATP-grasp_succ-CoA_synth-type"/>
</dbReference>
<dbReference type="InterPro" id="IPR013815">
    <property type="entry name" value="ATP_grasp_subdomain_1"/>
</dbReference>
<dbReference type="InterPro" id="IPR017866">
    <property type="entry name" value="Succ-CoA_synthase_bsu_CS"/>
</dbReference>
<dbReference type="InterPro" id="IPR005811">
    <property type="entry name" value="SUCC_ACL_C"/>
</dbReference>
<dbReference type="InterPro" id="IPR005809">
    <property type="entry name" value="Succ_CoA_ligase-like_bsu"/>
</dbReference>
<dbReference type="InterPro" id="IPR016102">
    <property type="entry name" value="Succinyl-CoA_synth-like"/>
</dbReference>
<dbReference type="NCBIfam" id="NF001913">
    <property type="entry name" value="PRK00696.1"/>
    <property type="match status" value="1"/>
</dbReference>
<dbReference type="NCBIfam" id="TIGR01016">
    <property type="entry name" value="sucCoAbeta"/>
    <property type="match status" value="1"/>
</dbReference>
<dbReference type="PANTHER" id="PTHR11815:SF10">
    <property type="entry name" value="SUCCINATE--COA LIGASE [GDP-FORMING] SUBUNIT BETA, MITOCHONDRIAL"/>
    <property type="match status" value="1"/>
</dbReference>
<dbReference type="PANTHER" id="PTHR11815">
    <property type="entry name" value="SUCCINYL-COA SYNTHETASE BETA CHAIN"/>
    <property type="match status" value="1"/>
</dbReference>
<dbReference type="Pfam" id="PF08442">
    <property type="entry name" value="ATP-grasp_2"/>
    <property type="match status" value="1"/>
</dbReference>
<dbReference type="Pfam" id="PF00549">
    <property type="entry name" value="Ligase_CoA"/>
    <property type="match status" value="1"/>
</dbReference>
<dbReference type="PIRSF" id="PIRSF001554">
    <property type="entry name" value="SucCS_beta"/>
    <property type="match status" value="1"/>
</dbReference>
<dbReference type="SUPFAM" id="SSF56059">
    <property type="entry name" value="Glutathione synthetase ATP-binding domain-like"/>
    <property type="match status" value="1"/>
</dbReference>
<dbReference type="SUPFAM" id="SSF52210">
    <property type="entry name" value="Succinyl-CoA synthetase domains"/>
    <property type="match status" value="1"/>
</dbReference>
<dbReference type="PROSITE" id="PS01217">
    <property type="entry name" value="SUCCINYL_COA_LIG_3"/>
    <property type="match status" value="1"/>
</dbReference>
<protein>
    <recommendedName>
        <fullName evidence="1">Succinate--CoA ligase [ADP-forming] subunit beta</fullName>
        <ecNumber evidence="1">6.2.1.5</ecNumber>
    </recommendedName>
    <alternativeName>
        <fullName evidence="1">Succinyl-CoA synthetase subunit beta</fullName>
        <shortName evidence="1">SCS-beta</shortName>
    </alternativeName>
</protein>
<sequence>MNIHEHQAKQILKKYGAVVPEGVFAFTVDELIEKAKSLKTEKFVLKAQIHAGGRGKAGGVKILNTIDELSVAAKELLGKTLVTHQTGPAGREVKRLYVEESSNIDKEFYLSCLVDRASSKIVFISSDQGGMDIEEVAEKTPEKIITTKIDITDEISDADCEKIIAIYALADDAKKQAIALIKSVYKMFLGTDANMVEVNPLILTKEKKIICLDAKVNFDSNALFRHPEIIELRDLNEEDPTEIDASKHDLAYIKLDGSIGCMVNGAGLAMATMDIIKLYGEEPANFLDVGGGASKEKVSAALKIILSDKNVKGILINIFGGIMRCDVLAQGVVDAAKEINISVPLVVRLAGTNFKEGKEILDNSGLKLISAENLDDAAQKIVEAIK</sequence>
<proteinExistence type="inferred from homology"/>
<reference key="1">
    <citation type="journal article" date="2005" name="Science">
        <title>Genome streamlining in a cosmopolitan oceanic bacterium.</title>
        <authorList>
            <person name="Giovannoni S.J."/>
            <person name="Tripp H.J."/>
            <person name="Givan S."/>
            <person name="Podar M."/>
            <person name="Vergin K.L."/>
            <person name="Baptista D."/>
            <person name="Bibbs L."/>
            <person name="Eads J."/>
            <person name="Richardson T.H."/>
            <person name="Noordewier M."/>
            <person name="Rappe M.S."/>
            <person name="Short J.M."/>
            <person name="Carrington J.C."/>
            <person name="Mathur E.J."/>
        </authorList>
    </citation>
    <scope>NUCLEOTIDE SEQUENCE [LARGE SCALE GENOMIC DNA]</scope>
    <source>
        <strain>HTCC1062</strain>
    </source>
</reference>
<comment type="function">
    <text evidence="1">Succinyl-CoA synthetase functions in the citric acid cycle (TCA), coupling the hydrolysis of succinyl-CoA to the synthesis of either ATP or GTP and thus represents the only step of substrate-level phosphorylation in the TCA. The beta subunit provides nucleotide specificity of the enzyme and binds the substrate succinate, while the binding sites for coenzyme A and phosphate are found in the alpha subunit.</text>
</comment>
<comment type="catalytic activity">
    <reaction evidence="1">
        <text>succinate + ATP + CoA = succinyl-CoA + ADP + phosphate</text>
        <dbReference type="Rhea" id="RHEA:17661"/>
        <dbReference type="ChEBI" id="CHEBI:30031"/>
        <dbReference type="ChEBI" id="CHEBI:30616"/>
        <dbReference type="ChEBI" id="CHEBI:43474"/>
        <dbReference type="ChEBI" id="CHEBI:57287"/>
        <dbReference type="ChEBI" id="CHEBI:57292"/>
        <dbReference type="ChEBI" id="CHEBI:456216"/>
        <dbReference type="EC" id="6.2.1.5"/>
    </reaction>
    <physiologicalReaction direction="right-to-left" evidence="1">
        <dbReference type="Rhea" id="RHEA:17663"/>
    </physiologicalReaction>
</comment>
<comment type="catalytic activity">
    <reaction evidence="1">
        <text>GTP + succinate + CoA = succinyl-CoA + GDP + phosphate</text>
        <dbReference type="Rhea" id="RHEA:22120"/>
        <dbReference type="ChEBI" id="CHEBI:30031"/>
        <dbReference type="ChEBI" id="CHEBI:37565"/>
        <dbReference type="ChEBI" id="CHEBI:43474"/>
        <dbReference type="ChEBI" id="CHEBI:57287"/>
        <dbReference type="ChEBI" id="CHEBI:57292"/>
        <dbReference type="ChEBI" id="CHEBI:58189"/>
    </reaction>
    <physiologicalReaction direction="right-to-left" evidence="1">
        <dbReference type="Rhea" id="RHEA:22122"/>
    </physiologicalReaction>
</comment>
<comment type="cofactor">
    <cofactor evidence="1">
        <name>Mg(2+)</name>
        <dbReference type="ChEBI" id="CHEBI:18420"/>
    </cofactor>
    <text evidence="1">Binds 1 Mg(2+) ion per subunit.</text>
</comment>
<comment type="pathway">
    <text evidence="1">Carbohydrate metabolism; tricarboxylic acid cycle; succinate from succinyl-CoA (ligase route): step 1/1.</text>
</comment>
<comment type="subunit">
    <text evidence="1">Heterotetramer of two alpha and two beta subunits.</text>
</comment>
<comment type="similarity">
    <text evidence="1">Belongs to the succinate/malate CoA ligase beta subunit family.</text>
</comment>
<organism>
    <name type="scientific">Pelagibacter ubique (strain HTCC1062)</name>
    <dbReference type="NCBI Taxonomy" id="335992"/>
    <lineage>
        <taxon>Bacteria</taxon>
        <taxon>Pseudomonadati</taxon>
        <taxon>Pseudomonadota</taxon>
        <taxon>Alphaproteobacteria</taxon>
        <taxon>Candidatus Pelagibacterales</taxon>
        <taxon>Candidatus Pelagibacteraceae</taxon>
        <taxon>Candidatus Pelagibacter</taxon>
    </lineage>
</organism>
<accession>Q4FP29</accession>
<feature type="chain" id="PRO_1000082155" description="Succinate--CoA ligase [ADP-forming] subunit beta">
    <location>
        <begin position="1"/>
        <end position="386"/>
    </location>
</feature>
<feature type="domain" description="ATP-grasp" evidence="1">
    <location>
        <begin position="9"/>
        <end position="244"/>
    </location>
</feature>
<feature type="binding site" evidence="1">
    <location>
        <position position="46"/>
    </location>
    <ligand>
        <name>ATP</name>
        <dbReference type="ChEBI" id="CHEBI:30616"/>
    </ligand>
</feature>
<feature type="binding site" evidence="1">
    <location>
        <begin position="53"/>
        <end position="55"/>
    </location>
    <ligand>
        <name>ATP</name>
        <dbReference type="ChEBI" id="CHEBI:30616"/>
    </ligand>
</feature>
<feature type="binding site" evidence="1">
    <location>
        <position position="99"/>
    </location>
    <ligand>
        <name>ATP</name>
        <dbReference type="ChEBI" id="CHEBI:30616"/>
    </ligand>
</feature>
<feature type="binding site" evidence="1">
    <location>
        <position position="102"/>
    </location>
    <ligand>
        <name>ATP</name>
        <dbReference type="ChEBI" id="CHEBI:30616"/>
    </ligand>
</feature>
<feature type="binding site" evidence="1">
    <location>
        <position position="107"/>
    </location>
    <ligand>
        <name>ATP</name>
        <dbReference type="ChEBI" id="CHEBI:30616"/>
    </ligand>
</feature>
<feature type="binding site" evidence="1">
    <location>
        <position position="199"/>
    </location>
    <ligand>
        <name>Mg(2+)</name>
        <dbReference type="ChEBI" id="CHEBI:18420"/>
    </ligand>
</feature>
<feature type="binding site" evidence="1">
    <location>
        <position position="213"/>
    </location>
    <ligand>
        <name>Mg(2+)</name>
        <dbReference type="ChEBI" id="CHEBI:18420"/>
    </ligand>
</feature>
<feature type="binding site" evidence="1">
    <location>
        <position position="264"/>
    </location>
    <ligand>
        <name>substrate</name>
        <note>ligand shared with subunit alpha</note>
    </ligand>
</feature>
<feature type="binding site" evidence="1">
    <location>
        <begin position="321"/>
        <end position="323"/>
    </location>
    <ligand>
        <name>substrate</name>
        <note>ligand shared with subunit alpha</note>
    </ligand>
</feature>
<evidence type="ECO:0000255" key="1">
    <source>
        <dbReference type="HAMAP-Rule" id="MF_00558"/>
    </source>
</evidence>
<keyword id="KW-0067">ATP-binding</keyword>
<keyword id="KW-0436">Ligase</keyword>
<keyword id="KW-0460">Magnesium</keyword>
<keyword id="KW-0479">Metal-binding</keyword>
<keyword id="KW-0547">Nucleotide-binding</keyword>
<keyword id="KW-1185">Reference proteome</keyword>
<keyword id="KW-0816">Tricarboxylic acid cycle</keyword>